<sequence>MASQPPPPPKPWETRRIPGTGPGPGPGPTFQSAELGPTLLTRPGQPTLTRVPPPILPRPSQQTGSGNLNTFRPAYSSFSSGYGAYGNSFYGSYSPYSYGYNGLGYNRLRIDDLPPSRFVQQAEESSRGAFQSIESIVHAFASVSMMMDATFSAVYNSFRAVLDVANHFSRLKIHFTKVFSAFALVRTIRYLYRRLQWMIGLRRGLENEDLWAESEGTVACLGAEDRAANSAKSWPIFLFFAVILGGPYLIWKLLSTHSDEVTDSTNWASGEDDHVVARAEYDFVAVSEEEISFRAGDMLNLALKEQQPRVRGWLLASLDGQTTGLIPANYVKILGKRRGRKTVESSRISKQQQSFTNTTLIKGATAADSLDDQEAAFESVFVETNKVPVASDSTGKNGDKQDL</sequence>
<dbReference type="EMBL" id="BC120277">
    <property type="protein sequence ID" value="AAI20278.1"/>
    <property type="molecule type" value="mRNA"/>
</dbReference>
<dbReference type="RefSeq" id="NP_001069680.1">
    <property type="nucleotide sequence ID" value="NM_001076212.2"/>
</dbReference>
<dbReference type="SMR" id="Q0P5B1"/>
<dbReference type="FunCoup" id="Q0P5B1">
    <property type="interactions" value="1743"/>
</dbReference>
<dbReference type="STRING" id="9913.ENSBTAP00000006917"/>
<dbReference type="PaxDb" id="9913-ENSBTAP00000006917"/>
<dbReference type="GeneID" id="540337"/>
<dbReference type="KEGG" id="bta:540337"/>
<dbReference type="CTD" id="5194"/>
<dbReference type="VEuPathDB" id="HostDB:ENSBTAG00000005257"/>
<dbReference type="eggNOG" id="KOG3875">
    <property type="taxonomic scope" value="Eukaryota"/>
</dbReference>
<dbReference type="HOGENOM" id="CLU_045457_0_0_1"/>
<dbReference type="InParanoid" id="Q0P5B1"/>
<dbReference type="OMA" id="EGWFPKK"/>
<dbReference type="OrthoDB" id="10037838at2759"/>
<dbReference type="TreeFam" id="TF327117"/>
<dbReference type="Reactome" id="R-BTA-8866654">
    <property type="pathway name" value="E3 ubiquitin ligases ubiquitinate target proteins"/>
</dbReference>
<dbReference type="Reactome" id="R-BTA-9033241">
    <property type="pathway name" value="Peroxisomal protein import"/>
</dbReference>
<dbReference type="Reactome" id="R-BTA-9603798">
    <property type="pathway name" value="Class I peroxisomal membrane protein import"/>
</dbReference>
<dbReference type="Proteomes" id="UP000009136">
    <property type="component" value="Chromosome 11"/>
</dbReference>
<dbReference type="Bgee" id="ENSBTAG00000005257">
    <property type="expression patterns" value="Expressed in spermatocyte and 106 other cell types or tissues"/>
</dbReference>
<dbReference type="GO" id="GO:1990429">
    <property type="term" value="C:peroxisomal importomer complex"/>
    <property type="evidence" value="ECO:0000318"/>
    <property type="project" value="GO_Central"/>
</dbReference>
<dbReference type="GO" id="GO:0005778">
    <property type="term" value="C:peroxisomal membrane"/>
    <property type="evidence" value="ECO:0000250"/>
    <property type="project" value="UniProtKB"/>
</dbReference>
<dbReference type="GO" id="GO:0008320">
    <property type="term" value="F:protein transmembrane transporter activity"/>
    <property type="evidence" value="ECO:0000250"/>
    <property type="project" value="UniProtKB"/>
</dbReference>
<dbReference type="GO" id="GO:0016560">
    <property type="term" value="P:protein import into peroxisome matrix, docking"/>
    <property type="evidence" value="ECO:0000250"/>
    <property type="project" value="UniProtKB"/>
</dbReference>
<dbReference type="CDD" id="cd11864">
    <property type="entry name" value="SH3_PEX13_eumet"/>
    <property type="match status" value="1"/>
</dbReference>
<dbReference type="FunFam" id="2.30.30.40:FF:000109">
    <property type="entry name" value="Peroxisomal biogenesis factor 13"/>
    <property type="match status" value="1"/>
</dbReference>
<dbReference type="Gene3D" id="2.30.30.40">
    <property type="entry name" value="SH3 Domains"/>
    <property type="match status" value="1"/>
</dbReference>
<dbReference type="InterPro" id="IPR007223">
    <property type="entry name" value="Peroxin-13_N"/>
</dbReference>
<dbReference type="InterPro" id="IPR035463">
    <property type="entry name" value="Pex13"/>
</dbReference>
<dbReference type="InterPro" id="IPR036028">
    <property type="entry name" value="SH3-like_dom_sf"/>
</dbReference>
<dbReference type="InterPro" id="IPR001452">
    <property type="entry name" value="SH3_domain"/>
</dbReference>
<dbReference type="PANTHER" id="PTHR19332">
    <property type="entry name" value="PEROXISOMAL MEMBRANE PROTEIN PEX13"/>
    <property type="match status" value="1"/>
</dbReference>
<dbReference type="PANTHER" id="PTHR19332:SF1">
    <property type="entry name" value="PEROXISOMAL MEMBRANE PROTEIN PEX13"/>
    <property type="match status" value="1"/>
</dbReference>
<dbReference type="Pfam" id="PF04088">
    <property type="entry name" value="Peroxin-13_N"/>
    <property type="match status" value="1"/>
</dbReference>
<dbReference type="Pfam" id="PF14604">
    <property type="entry name" value="SH3_9"/>
    <property type="match status" value="1"/>
</dbReference>
<dbReference type="PRINTS" id="PR00452">
    <property type="entry name" value="SH3DOMAIN"/>
</dbReference>
<dbReference type="SMART" id="SM00326">
    <property type="entry name" value="SH3"/>
    <property type="match status" value="1"/>
</dbReference>
<dbReference type="SUPFAM" id="SSF50044">
    <property type="entry name" value="SH3-domain"/>
    <property type="match status" value="1"/>
</dbReference>
<dbReference type="PROSITE" id="PS50002">
    <property type="entry name" value="SH3"/>
    <property type="match status" value="1"/>
</dbReference>
<accession>Q0P5B1</accession>
<evidence type="ECO:0000250" key="1">
    <source>
        <dbReference type="UniProtKB" id="D4A2Y9"/>
    </source>
</evidence>
<evidence type="ECO:0000250" key="2">
    <source>
        <dbReference type="UniProtKB" id="P80667"/>
    </source>
</evidence>
<evidence type="ECO:0000250" key="3">
    <source>
        <dbReference type="UniProtKB" id="Q92968"/>
    </source>
</evidence>
<evidence type="ECO:0000250" key="4">
    <source>
        <dbReference type="UniProtKB" id="Q9D0K1"/>
    </source>
</evidence>
<evidence type="ECO:0000255" key="5"/>
<evidence type="ECO:0000255" key="6">
    <source>
        <dbReference type="PROSITE-ProRule" id="PRU00192"/>
    </source>
</evidence>
<evidence type="ECO:0000256" key="7">
    <source>
        <dbReference type="SAM" id="MobiDB-lite"/>
    </source>
</evidence>
<evidence type="ECO:0000305" key="8"/>
<gene>
    <name type="primary">PEX13</name>
</gene>
<proteinExistence type="evidence at transcript level"/>
<organism>
    <name type="scientific">Bos taurus</name>
    <name type="common">Bovine</name>
    <dbReference type="NCBI Taxonomy" id="9913"/>
    <lineage>
        <taxon>Eukaryota</taxon>
        <taxon>Metazoa</taxon>
        <taxon>Chordata</taxon>
        <taxon>Craniata</taxon>
        <taxon>Vertebrata</taxon>
        <taxon>Euteleostomi</taxon>
        <taxon>Mammalia</taxon>
        <taxon>Eutheria</taxon>
        <taxon>Laurasiatheria</taxon>
        <taxon>Artiodactyla</taxon>
        <taxon>Ruminantia</taxon>
        <taxon>Pecora</taxon>
        <taxon>Bovidae</taxon>
        <taxon>Bovinae</taxon>
        <taxon>Bos</taxon>
    </lineage>
</organism>
<reference key="1">
    <citation type="submission" date="2006-08" db="EMBL/GenBank/DDBJ databases">
        <authorList>
            <consortium name="NIH - Mammalian Gene Collection (MGC) project"/>
        </authorList>
    </citation>
    <scope>NUCLEOTIDE SEQUENCE [LARGE SCALE MRNA]</scope>
    <source>
        <strain>Hereford</strain>
        <tissue>Fetal cerebellum</tissue>
    </source>
</reference>
<keyword id="KW-0472">Membrane</keyword>
<keyword id="KW-0576">Peroxisome</keyword>
<keyword id="KW-0597">Phosphoprotein</keyword>
<keyword id="KW-0653">Protein transport</keyword>
<keyword id="KW-1185">Reference proteome</keyword>
<keyword id="KW-0728">SH3 domain</keyword>
<keyword id="KW-0811">Translocation</keyword>
<keyword id="KW-0812">Transmembrane</keyword>
<keyword id="KW-1133">Transmembrane helix</keyword>
<keyword id="KW-0813">Transport</keyword>
<feature type="chain" id="PRO_0000371413" description="Peroxisomal membrane protein PEX13">
    <location>
        <begin position="1"/>
        <end position="403"/>
    </location>
</feature>
<feature type="topological domain" description="Peroxisomal matrix" evidence="1">
    <location>
        <begin position="1"/>
        <end position="134"/>
    </location>
</feature>
<feature type="transmembrane region" description="Helical" evidence="5">
    <location>
        <begin position="135"/>
        <end position="155"/>
    </location>
</feature>
<feature type="topological domain" description="Cytoplasmic" evidence="8">
    <location>
        <begin position="156"/>
        <end position="174"/>
    </location>
</feature>
<feature type="transmembrane region" description="Helical" evidence="5">
    <location>
        <begin position="175"/>
        <end position="192"/>
    </location>
</feature>
<feature type="topological domain" description="Peroxisomal matrix" evidence="8">
    <location>
        <begin position="193"/>
        <end position="233"/>
    </location>
</feature>
<feature type="transmembrane region" description="Helical" evidence="5">
    <location>
        <begin position="234"/>
        <end position="254"/>
    </location>
</feature>
<feature type="topological domain" description="Cytoplasmic" evidence="1">
    <location>
        <begin position="255"/>
        <end position="403"/>
    </location>
</feature>
<feature type="domain" description="SH3" evidence="6">
    <location>
        <begin position="272"/>
        <end position="336"/>
    </location>
</feature>
<feature type="region of interest" description="Disordered" evidence="7">
    <location>
        <begin position="1"/>
        <end position="69"/>
    </location>
</feature>
<feature type="region of interest" description="Targeting to peroxisomes" evidence="3">
    <location>
        <begin position="145"/>
        <end position="233"/>
    </location>
</feature>
<feature type="region of interest" description="Interaction with PEX19" evidence="3">
    <location>
        <begin position="175"/>
        <end position="196"/>
    </location>
</feature>
<feature type="compositionally biased region" description="Pro residues" evidence="7">
    <location>
        <begin position="1"/>
        <end position="11"/>
    </location>
</feature>
<feature type="compositionally biased region" description="Polar residues" evidence="7">
    <location>
        <begin position="59"/>
        <end position="69"/>
    </location>
</feature>
<feature type="modified residue" description="Phosphoserine" evidence="4">
    <location>
        <position position="354"/>
    </location>
</feature>
<comment type="function">
    <text evidence="2 3">Component of the PEX13-PEX14 docking complex, a translocon channel that specifically mediates the import of peroxisomal cargo proteins bound to PEX5 receptor (By similarity). The PEX13-PEX14 docking complex forms a large import pore which can be opened to a diameter of about 9 nm (By similarity). Mechanistically, PEX5 receptor along with cargo proteins associates with the PEX14 subunit of the PEX13-PEX14 docking complex in the cytosol, leading to the insertion of the receptor into the organelle membrane with the concomitant translocation of the cargo into the peroxisome matrix. Involved in the import of PTS1- and PTS2-type containing proteins (By similarity).</text>
</comment>
<comment type="subunit">
    <text evidence="3">Interacts (via SH3 domain) with PEX14 (via SH3-binding motif); forming the PEX13-PEX14 docking complex. Interacts with PEX19.</text>
</comment>
<comment type="subcellular location">
    <subcellularLocation>
        <location evidence="3">Peroxisome membrane</location>
        <topology evidence="5">Multi-pass membrane protein</topology>
    </subcellularLocation>
</comment>
<comment type="similarity">
    <text evidence="8">Belongs to the peroxin-13 family.</text>
</comment>
<name>PEX13_BOVIN</name>
<protein>
    <recommendedName>
        <fullName evidence="8">Peroxisomal membrane protein PEX13</fullName>
    </recommendedName>
    <alternativeName>
        <fullName evidence="8">Peroxin-13</fullName>
    </alternativeName>
</protein>